<protein>
    <recommendedName>
        <fullName evidence="1">tRNA pseudouridine synthase A</fullName>
        <ecNumber evidence="1">5.4.99.12</ecNumber>
    </recommendedName>
    <alternativeName>
        <fullName evidence="1">tRNA pseudouridine(38-40) synthase</fullName>
    </alternativeName>
    <alternativeName>
        <fullName evidence="1">tRNA pseudouridylate synthase I</fullName>
    </alternativeName>
    <alternativeName>
        <fullName evidence="1">tRNA-uridine isomerase I</fullName>
    </alternativeName>
</protein>
<reference key="1">
    <citation type="journal article" date="2004" name="J. Mol. Microbiol. Biotechnol.">
        <title>The complete genome sequence of Bacillus licheniformis DSM13, an organism with great industrial potential.</title>
        <authorList>
            <person name="Veith B."/>
            <person name="Herzberg C."/>
            <person name="Steckel S."/>
            <person name="Feesche J."/>
            <person name="Maurer K.H."/>
            <person name="Ehrenreich P."/>
            <person name="Baeumer S."/>
            <person name="Henne A."/>
            <person name="Liesegang H."/>
            <person name="Merkl R."/>
            <person name="Ehrenreich A."/>
            <person name="Gottschalk G."/>
        </authorList>
    </citation>
    <scope>NUCLEOTIDE SEQUENCE [LARGE SCALE GENOMIC DNA]</scope>
    <source>
        <strain>ATCC 14580 / DSM 13 / JCM 2505 / CCUG 7422 / NBRC 12200 / NCIMB 9375 / NCTC 10341 / NRRL NRS-1264 / Gibson 46</strain>
    </source>
</reference>
<reference key="2">
    <citation type="journal article" date="2004" name="Genome Biol.">
        <title>Complete genome sequence of the industrial bacterium Bacillus licheniformis and comparisons with closely related Bacillus species.</title>
        <authorList>
            <person name="Rey M.W."/>
            <person name="Ramaiya P."/>
            <person name="Nelson B.A."/>
            <person name="Brody-Karpin S.D."/>
            <person name="Zaretsky E.J."/>
            <person name="Tang M."/>
            <person name="Lopez de Leon A."/>
            <person name="Xiang H."/>
            <person name="Gusti V."/>
            <person name="Clausen I.G."/>
            <person name="Olsen P.B."/>
            <person name="Rasmussen M.D."/>
            <person name="Andersen J.T."/>
            <person name="Joergensen P.L."/>
            <person name="Larsen T.S."/>
            <person name="Sorokin A."/>
            <person name="Bolotin A."/>
            <person name="Lapidus A."/>
            <person name="Galleron N."/>
            <person name="Ehrlich S.D."/>
            <person name="Berka R.M."/>
        </authorList>
    </citation>
    <scope>NUCLEOTIDE SEQUENCE [LARGE SCALE GENOMIC DNA]</scope>
    <source>
        <strain>ATCC 14580 / DSM 13 / JCM 2505 / CCUG 7422 / NBRC 12200 / NCIMB 9375 / NCTC 10341 / NRRL NRS-1264 / Gibson 46</strain>
    </source>
</reference>
<organism>
    <name type="scientific">Bacillus licheniformis (strain ATCC 14580 / DSM 13 / JCM 2505 / CCUG 7422 / NBRC 12200 / NCIMB 9375 / NCTC 10341 / NRRL NRS-1264 / Gibson 46)</name>
    <dbReference type="NCBI Taxonomy" id="279010"/>
    <lineage>
        <taxon>Bacteria</taxon>
        <taxon>Bacillati</taxon>
        <taxon>Bacillota</taxon>
        <taxon>Bacilli</taxon>
        <taxon>Bacillales</taxon>
        <taxon>Bacillaceae</taxon>
        <taxon>Bacillus</taxon>
    </lineage>
</organism>
<proteinExistence type="inferred from homology"/>
<sequence length="247" mass="28240">MRMKCTISYDGHLFYGYQVQPGQRTIQDELEKALQTLHKAKERIPVVSSGRTDSGVHAVGQTIHFDSPLSIPEAKWPYALNALLPDDISVRKAEAVNDQFHARFSAKRKEYRYMIYRGRHPDVFKRYYAYHVPYDLDMEKVKEASRYLVGTHDFTSFCATKTEVKDKVRTVHELEWSDTGDGLQMRIVGSGFLYNMVRIIAGTLLDVGTGKFSPGDIEKMILAKNRDAAGRTAPAHGLYLWRVIYDN</sequence>
<feature type="chain" id="PRO_0000057331" description="tRNA pseudouridine synthase A">
    <location>
        <begin position="1"/>
        <end position="247"/>
    </location>
</feature>
<feature type="active site" description="Nucleophile" evidence="1">
    <location>
        <position position="53"/>
    </location>
</feature>
<feature type="binding site" evidence="1">
    <location>
        <position position="111"/>
    </location>
    <ligand>
        <name>substrate</name>
    </ligand>
</feature>
<evidence type="ECO:0000255" key="1">
    <source>
        <dbReference type="HAMAP-Rule" id="MF_00171"/>
    </source>
</evidence>
<comment type="function">
    <text evidence="1">Formation of pseudouridine at positions 38, 39 and 40 in the anticodon stem and loop of transfer RNAs.</text>
</comment>
<comment type="catalytic activity">
    <reaction evidence="1">
        <text>uridine(38/39/40) in tRNA = pseudouridine(38/39/40) in tRNA</text>
        <dbReference type="Rhea" id="RHEA:22376"/>
        <dbReference type="Rhea" id="RHEA-COMP:10085"/>
        <dbReference type="Rhea" id="RHEA-COMP:10087"/>
        <dbReference type="ChEBI" id="CHEBI:65314"/>
        <dbReference type="ChEBI" id="CHEBI:65315"/>
        <dbReference type="EC" id="5.4.99.12"/>
    </reaction>
</comment>
<comment type="subunit">
    <text evidence="1">Homodimer.</text>
</comment>
<comment type="similarity">
    <text evidence="1">Belongs to the tRNA pseudouridine synthase TruA family.</text>
</comment>
<name>TRUA_BACLD</name>
<dbReference type="EC" id="5.4.99.12" evidence="1"/>
<dbReference type="EMBL" id="AE017333">
    <property type="protein sequence ID" value="AAU39140.1"/>
    <property type="molecule type" value="Genomic_DNA"/>
</dbReference>
<dbReference type="EMBL" id="CP000002">
    <property type="protein sequence ID" value="AAU21795.1"/>
    <property type="molecule type" value="Genomic_DNA"/>
</dbReference>
<dbReference type="RefSeq" id="WP_003178391.1">
    <property type="nucleotide sequence ID" value="NC_006322.1"/>
</dbReference>
<dbReference type="SMR" id="Q65P74"/>
<dbReference type="STRING" id="279010.BL01020"/>
<dbReference type="GeneID" id="92858870"/>
<dbReference type="KEGG" id="bld:BLi00166"/>
<dbReference type="KEGG" id="bli:BL01020"/>
<dbReference type="eggNOG" id="COG0101">
    <property type="taxonomic scope" value="Bacteria"/>
</dbReference>
<dbReference type="HOGENOM" id="CLU_014673_0_1_9"/>
<dbReference type="Proteomes" id="UP000000606">
    <property type="component" value="Chromosome"/>
</dbReference>
<dbReference type="GO" id="GO:0003723">
    <property type="term" value="F:RNA binding"/>
    <property type="evidence" value="ECO:0007669"/>
    <property type="project" value="InterPro"/>
</dbReference>
<dbReference type="GO" id="GO:0160147">
    <property type="term" value="F:tRNA pseudouridine(38-40) synthase activity"/>
    <property type="evidence" value="ECO:0007669"/>
    <property type="project" value="UniProtKB-EC"/>
</dbReference>
<dbReference type="GO" id="GO:0031119">
    <property type="term" value="P:tRNA pseudouridine synthesis"/>
    <property type="evidence" value="ECO:0007669"/>
    <property type="project" value="UniProtKB-UniRule"/>
</dbReference>
<dbReference type="CDD" id="cd02570">
    <property type="entry name" value="PseudoU_synth_EcTruA"/>
    <property type="match status" value="1"/>
</dbReference>
<dbReference type="FunFam" id="3.30.70.580:FF:000001">
    <property type="entry name" value="tRNA pseudouridine synthase A"/>
    <property type="match status" value="1"/>
</dbReference>
<dbReference type="Gene3D" id="3.30.70.660">
    <property type="entry name" value="Pseudouridine synthase I, catalytic domain, C-terminal subdomain"/>
    <property type="match status" value="1"/>
</dbReference>
<dbReference type="Gene3D" id="3.30.70.580">
    <property type="entry name" value="Pseudouridine synthase I, catalytic domain, N-terminal subdomain"/>
    <property type="match status" value="1"/>
</dbReference>
<dbReference type="HAMAP" id="MF_00171">
    <property type="entry name" value="TruA"/>
    <property type="match status" value="1"/>
</dbReference>
<dbReference type="InterPro" id="IPR020103">
    <property type="entry name" value="PsdUridine_synth_cat_dom_sf"/>
</dbReference>
<dbReference type="InterPro" id="IPR001406">
    <property type="entry name" value="PsdUridine_synth_TruA"/>
</dbReference>
<dbReference type="InterPro" id="IPR020097">
    <property type="entry name" value="PsdUridine_synth_TruA_a/b_dom"/>
</dbReference>
<dbReference type="InterPro" id="IPR020095">
    <property type="entry name" value="PsdUridine_synth_TruA_C"/>
</dbReference>
<dbReference type="InterPro" id="IPR020094">
    <property type="entry name" value="TruA/RsuA/RluB/E/F_N"/>
</dbReference>
<dbReference type="NCBIfam" id="TIGR00071">
    <property type="entry name" value="hisT_truA"/>
    <property type="match status" value="1"/>
</dbReference>
<dbReference type="PANTHER" id="PTHR11142">
    <property type="entry name" value="PSEUDOURIDYLATE SYNTHASE"/>
    <property type="match status" value="1"/>
</dbReference>
<dbReference type="PANTHER" id="PTHR11142:SF0">
    <property type="entry name" value="TRNA PSEUDOURIDINE SYNTHASE-LIKE 1"/>
    <property type="match status" value="1"/>
</dbReference>
<dbReference type="Pfam" id="PF01416">
    <property type="entry name" value="PseudoU_synth_1"/>
    <property type="match status" value="2"/>
</dbReference>
<dbReference type="PIRSF" id="PIRSF001430">
    <property type="entry name" value="tRNA_psdUrid_synth"/>
    <property type="match status" value="1"/>
</dbReference>
<dbReference type="SUPFAM" id="SSF55120">
    <property type="entry name" value="Pseudouridine synthase"/>
    <property type="match status" value="1"/>
</dbReference>
<keyword id="KW-0413">Isomerase</keyword>
<keyword id="KW-1185">Reference proteome</keyword>
<keyword id="KW-0819">tRNA processing</keyword>
<accession>Q65P74</accession>
<accession>Q62ZL3</accession>
<gene>
    <name evidence="1" type="primary">truA</name>
    <name type="ordered locus">BLi00166</name>
    <name type="ordered locus">BL01020</name>
</gene>